<dbReference type="EC" id="5.4.2.12" evidence="1"/>
<dbReference type="EMBL" id="CP000469">
    <property type="protein sequence ID" value="ABK46296.1"/>
    <property type="molecule type" value="Genomic_DNA"/>
</dbReference>
<dbReference type="RefSeq" id="WP_011715340.1">
    <property type="nucleotide sequence ID" value="NC_008577.1"/>
</dbReference>
<dbReference type="SMR" id="A0KR77"/>
<dbReference type="STRING" id="94122.Shewana3_0051"/>
<dbReference type="KEGG" id="shn:Shewana3_0051"/>
<dbReference type="eggNOG" id="COG0696">
    <property type="taxonomic scope" value="Bacteria"/>
</dbReference>
<dbReference type="HOGENOM" id="CLU_026099_2_0_6"/>
<dbReference type="OrthoDB" id="9800863at2"/>
<dbReference type="UniPathway" id="UPA00109">
    <property type="reaction ID" value="UER00186"/>
</dbReference>
<dbReference type="Proteomes" id="UP000002589">
    <property type="component" value="Chromosome"/>
</dbReference>
<dbReference type="GO" id="GO:0005829">
    <property type="term" value="C:cytosol"/>
    <property type="evidence" value="ECO:0007669"/>
    <property type="project" value="TreeGrafter"/>
</dbReference>
<dbReference type="GO" id="GO:0030145">
    <property type="term" value="F:manganese ion binding"/>
    <property type="evidence" value="ECO:0007669"/>
    <property type="project" value="UniProtKB-UniRule"/>
</dbReference>
<dbReference type="GO" id="GO:0004619">
    <property type="term" value="F:phosphoglycerate mutase activity"/>
    <property type="evidence" value="ECO:0007669"/>
    <property type="project" value="UniProtKB-EC"/>
</dbReference>
<dbReference type="GO" id="GO:0006007">
    <property type="term" value="P:glucose catabolic process"/>
    <property type="evidence" value="ECO:0007669"/>
    <property type="project" value="InterPro"/>
</dbReference>
<dbReference type="GO" id="GO:0006096">
    <property type="term" value="P:glycolytic process"/>
    <property type="evidence" value="ECO:0007669"/>
    <property type="project" value="UniProtKB-UniRule"/>
</dbReference>
<dbReference type="CDD" id="cd16010">
    <property type="entry name" value="iPGM"/>
    <property type="match status" value="1"/>
</dbReference>
<dbReference type="FunFam" id="3.40.1450.10:FF:000001">
    <property type="entry name" value="2,3-bisphosphoglycerate-independent phosphoglycerate mutase"/>
    <property type="match status" value="1"/>
</dbReference>
<dbReference type="FunFam" id="3.40.720.10:FF:000001">
    <property type="entry name" value="2,3-bisphosphoglycerate-independent phosphoglycerate mutase"/>
    <property type="match status" value="1"/>
</dbReference>
<dbReference type="Gene3D" id="3.40.720.10">
    <property type="entry name" value="Alkaline Phosphatase, subunit A"/>
    <property type="match status" value="1"/>
</dbReference>
<dbReference type="Gene3D" id="3.40.1450.10">
    <property type="entry name" value="BPG-independent phosphoglycerate mutase, domain B"/>
    <property type="match status" value="1"/>
</dbReference>
<dbReference type="HAMAP" id="MF_01038">
    <property type="entry name" value="GpmI"/>
    <property type="match status" value="1"/>
</dbReference>
<dbReference type="InterPro" id="IPR017850">
    <property type="entry name" value="Alkaline_phosphatase_core_sf"/>
</dbReference>
<dbReference type="InterPro" id="IPR011258">
    <property type="entry name" value="BPG-indep_PGM_N"/>
</dbReference>
<dbReference type="InterPro" id="IPR006124">
    <property type="entry name" value="Metalloenzyme"/>
</dbReference>
<dbReference type="InterPro" id="IPR036646">
    <property type="entry name" value="PGAM_B_sf"/>
</dbReference>
<dbReference type="InterPro" id="IPR005995">
    <property type="entry name" value="Pgm_bpd_ind"/>
</dbReference>
<dbReference type="NCBIfam" id="TIGR01307">
    <property type="entry name" value="pgm_bpd_ind"/>
    <property type="match status" value="1"/>
</dbReference>
<dbReference type="NCBIfam" id="NF003897">
    <property type="entry name" value="PRK05434.1-5"/>
    <property type="match status" value="1"/>
</dbReference>
<dbReference type="PANTHER" id="PTHR31637">
    <property type="entry name" value="2,3-BISPHOSPHOGLYCERATE-INDEPENDENT PHOSPHOGLYCERATE MUTASE"/>
    <property type="match status" value="1"/>
</dbReference>
<dbReference type="PANTHER" id="PTHR31637:SF0">
    <property type="entry name" value="2,3-BISPHOSPHOGLYCERATE-INDEPENDENT PHOSPHOGLYCERATE MUTASE"/>
    <property type="match status" value="1"/>
</dbReference>
<dbReference type="Pfam" id="PF06415">
    <property type="entry name" value="iPGM_N"/>
    <property type="match status" value="1"/>
</dbReference>
<dbReference type="Pfam" id="PF01676">
    <property type="entry name" value="Metalloenzyme"/>
    <property type="match status" value="1"/>
</dbReference>
<dbReference type="PIRSF" id="PIRSF001492">
    <property type="entry name" value="IPGAM"/>
    <property type="match status" value="1"/>
</dbReference>
<dbReference type="SUPFAM" id="SSF64158">
    <property type="entry name" value="2,3-Bisphosphoglycerate-independent phosphoglycerate mutase, substrate-binding domain"/>
    <property type="match status" value="1"/>
</dbReference>
<dbReference type="SUPFAM" id="SSF53649">
    <property type="entry name" value="Alkaline phosphatase-like"/>
    <property type="match status" value="1"/>
</dbReference>
<organism>
    <name type="scientific">Shewanella sp. (strain ANA-3)</name>
    <dbReference type="NCBI Taxonomy" id="94122"/>
    <lineage>
        <taxon>Bacteria</taxon>
        <taxon>Pseudomonadati</taxon>
        <taxon>Pseudomonadota</taxon>
        <taxon>Gammaproteobacteria</taxon>
        <taxon>Alteromonadales</taxon>
        <taxon>Shewanellaceae</taxon>
        <taxon>Shewanella</taxon>
    </lineage>
</organism>
<proteinExistence type="inferred from homology"/>
<keyword id="KW-0324">Glycolysis</keyword>
<keyword id="KW-0413">Isomerase</keyword>
<keyword id="KW-0464">Manganese</keyword>
<keyword id="KW-0479">Metal-binding</keyword>
<protein>
    <recommendedName>
        <fullName evidence="1">2,3-bisphosphoglycerate-independent phosphoglycerate mutase</fullName>
        <shortName evidence="1">BPG-independent PGAM</shortName>
        <shortName evidence="1">Phosphoglyceromutase</shortName>
        <shortName evidence="1">iPGM</shortName>
        <ecNumber evidence="1">5.4.2.12</ecNumber>
    </recommendedName>
</protein>
<sequence>MTTTKRPIALLILDGWGYRENTHMNAIYHANTPVLDRLNAQYAHGLISGSGLDVGLPDGQMGNSEVGHINLGSGRIVYQELTRISKAIADHEFEQNPALCDAVDAAVKAGGAVHIMGLLSPGGVHSHEEHIEAMCRMAVARGATKVYLHAFLDGRDTPPRSAKGSLSHFDDLFTTLGHGRIASIIGRYFAMDRDNRWDRVSQAYELITQGKAKFQYDNAVTALEAAYERNENDEFVSSSAITDSEGKVASLNDGDALIFMNFRADRARQITRSFINADFDGFERAVTPKVNFVTLTEYAADIKAPIAYPSENLVNTLGEVLQNRGRTQLRISETEKYAHVTFFFNGGKEEPFNGEDRILINSPKVATYDLQPEMSSTELTDKLVAAIESAQYDVIICNYPNGDMVGHTGNFDAAVKACEAVDACIGRVVDALAKVGGECIITADHGNAEQMTDETTGQAHTAHTSELVPFVFVGRDATIDEGGKLSDVAPTILHLMGETIPAEMTGKPLIHVKE</sequence>
<name>GPMI_SHESA</name>
<accession>A0KR77</accession>
<evidence type="ECO:0000255" key="1">
    <source>
        <dbReference type="HAMAP-Rule" id="MF_01038"/>
    </source>
</evidence>
<reference key="1">
    <citation type="submission" date="2006-09" db="EMBL/GenBank/DDBJ databases">
        <title>Complete sequence of chromosome 1 of Shewanella sp. ANA-3.</title>
        <authorList>
            <person name="Copeland A."/>
            <person name="Lucas S."/>
            <person name="Lapidus A."/>
            <person name="Barry K."/>
            <person name="Detter J.C."/>
            <person name="Glavina del Rio T."/>
            <person name="Hammon N."/>
            <person name="Israni S."/>
            <person name="Dalin E."/>
            <person name="Tice H."/>
            <person name="Pitluck S."/>
            <person name="Chertkov O."/>
            <person name="Brettin T."/>
            <person name="Bruce D."/>
            <person name="Han C."/>
            <person name="Tapia R."/>
            <person name="Gilna P."/>
            <person name="Schmutz J."/>
            <person name="Larimer F."/>
            <person name="Land M."/>
            <person name="Hauser L."/>
            <person name="Kyrpides N."/>
            <person name="Kim E."/>
            <person name="Newman D."/>
            <person name="Salticov C."/>
            <person name="Konstantinidis K."/>
            <person name="Klappenback J."/>
            <person name="Tiedje J."/>
            <person name="Richardson P."/>
        </authorList>
    </citation>
    <scope>NUCLEOTIDE SEQUENCE [LARGE SCALE GENOMIC DNA]</scope>
    <source>
        <strain>ANA-3</strain>
    </source>
</reference>
<comment type="function">
    <text evidence="1">Catalyzes the interconversion of 2-phosphoglycerate and 3-phosphoglycerate.</text>
</comment>
<comment type="catalytic activity">
    <reaction evidence="1">
        <text>(2R)-2-phosphoglycerate = (2R)-3-phosphoglycerate</text>
        <dbReference type="Rhea" id="RHEA:15901"/>
        <dbReference type="ChEBI" id="CHEBI:58272"/>
        <dbReference type="ChEBI" id="CHEBI:58289"/>
        <dbReference type="EC" id="5.4.2.12"/>
    </reaction>
</comment>
<comment type="cofactor">
    <cofactor evidence="1">
        <name>Mn(2+)</name>
        <dbReference type="ChEBI" id="CHEBI:29035"/>
    </cofactor>
    <text evidence="1">Binds 2 manganese ions per subunit.</text>
</comment>
<comment type="pathway">
    <text evidence="1">Carbohydrate degradation; glycolysis; pyruvate from D-glyceraldehyde 3-phosphate: step 3/5.</text>
</comment>
<comment type="subunit">
    <text evidence="1">Monomer.</text>
</comment>
<comment type="similarity">
    <text evidence="1">Belongs to the BPG-independent phosphoglycerate mutase family.</text>
</comment>
<feature type="chain" id="PRO_1000064006" description="2,3-bisphosphoglycerate-independent phosphoglycerate mutase">
    <location>
        <begin position="1"/>
        <end position="514"/>
    </location>
</feature>
<feature type="active site" description="Phosphoserine intermediate" evidence="1">
    <location>
        <position position="64"/>
    </location>
</feature>
<feature type="binding site" evidence="1">
    <location>
        <position position="14"/>
    </location>
    <ligand>
        <name>Mn(2+)</name>
        <dbReference type="ChEBI" id="CHEBI:29035"/>
        <label>2</label>
    </ligand>
</feature>
<feature type="binding site" evidence="1">
    <location>
        <position position="64"/>
    </location>
    <ligand>
        <name>Mn(2+)</name>
        <dbReference type="ChEBI" id="CHEBI:29035"/>
        <label>2</label>
    </ligand>
</feature>
<feature type="binding site" evidence="1">
    <location>
        <position position="125"/>
    </location>
    <ligand>
        <name>substrate</name>
    </ligand>
</feature>
<feature type="binding site" evidence="1">
    <location>
        <begin position="155"/>
        <end position="156"/>
    </location>
    <ligand>
        <name>substrate</name>
    </ligand>
</feature>
<feature type="binding site" evidence="1">
    <location>
        <position position="187"/>
    </location>
    <ligand>
        <name>substrate</name>
    </ligand>
</feature>
<feature type="binding site" evidence="1">
    <location>
        <position position="193"/>
    </location>
    <ligand>
        <name>substrate</name>
    </ligand>
</feature>
<feature type="binding site" evidence="1">
    <location>
        <begin position="263"/>
        <end position="266"/>
    </location>
    <ligand>
        <name>substrate</name>
    </ligand>
</feature>
<feature type="binding site" evidence="1">
    <location>
        <position position="336"/>
    </location>
    <ligand>
        <name>substrate</name>
    </ligand>
</feature>
<feature type="binding site" evidence="1">
    <location>
        <position position="403"/>
    </location>
    <ligand>
        <name>Mn(2+)</name>
        <dbReference type="ChEBI" id="CHEBI:29035"/>
        <label>1</label>
    </ligand>
</feature>
<feature type="binding site" evidence="1">
    <location>
        <position position="407"/>
    </location>
    <ligand>
        <name>Mn(2+)</name>
        <dbReference type="ChEBI" id="CHEBI:29035"/>
        <label>1</label>
    </ligand>
</feature>
<feature type="binding site" evidence="1">
    <location>
        <position position="444"/>
    </location>
    <ligand>
        <name>Mn(2+)</name>
        <dbReference type="ChEBI" id="CHEBI:29035"/>
        <label>2</label>
    </ligand>
</feature>
<feature type="binding site" evidence="1">
    <location>
        <position position="445"/>
    </location>
    <ligand>
        <name>Mn(2+)</name>
        <dbReference type="ChEBI" id="CHEBI:29035"/>
        <label>2</label>
    </ligand>
</feature>
<feature type="binding site" evidence="1">
    <location>
        <position position="463"/>
    </location>
    <ligand>
        <name>Mn(2+)</name>
        <dbReference type="ChEBI" id="CHEBI:29035"/>
        <label>1</label>
    </ligand>
</feature>
<gene>
    <name evidence="1" type="primary">gpmI</name>
    <name type="ordered locus">Shewana3_0051</name>
</gene>